<dbReference type="EC" id="1.6.5.-" evidence="1"/>
<dbReference type="EC" id="1.7.1.17" evidence="1"/>
<dbReference type="EMBL" id="CP000781">
    <property type="protein sequence ID" value="ABS66224.1"/>
    <property type="molecule type" value="Genomic_DNA"/>
</dbReference>
<dbReference type="SMR" id="A7IDY1"/>
<dbReference type="STRING" id="78245.Xaut_0973"/>
<dbReference type="KEGG" id="xau:Xaut_0973"/>
<dbReference type="eggNOG" id="COG1182">
    <property type="taxonomic scope" value="Bacteria"/>
</dbReference>
<dbReference type="HOGENOM" id="CLU_088964_0_3_5"/>
<dbReference type="PhylomeDB" id="A7IDY1"/>
<dbReference type="Proteomes" id="UP000002417">
    <property type="component" value="Chromosome"/>
</dbReference>
<dbReference type="GO" id="GO:0009055">
    <property type="term" value="F:electron transfer activity"/>
    <property type="evidence" value="ECO:0007669"/>
    <property type="project" value="UniProtKB-UniRule"/>
</dbReference>
<dbReference type="GO" id="GO:0010181">
    <property type="term" value="F:FMN binding"/>
    <property type="evidence" value="ECO:0007669"/>
    <property type="project" value="UniProtKB-UniRule"/>
</dbReference>
<dbReference type="GO" id="GO:0016652">
    <property type="term" value="F:oxidoreductase activity, acting on NAD(P)H as acceptor"/>
    <property type="evidence" value="ECO:0007669"/>
    <property type="project" value="UniProtKB-UniRule"/>
</dbReference>
<dbReference type="GO" id="GO:0016655">
    <property type="term" value="F:oxidoreductase activity, acting on NAD(P)H, quinone or similar compound as acceptor"/>
    <property type="evidence" value="ECO:0007669"/>
    <property type="project" value="InterPro"/>
</dbReference>
<dbReference type="Gene3D" id="3.40.50.360">
    <property type="match status" value="1"/>
</dbReference>
<dbReference type="HAMAP" id="MF_01216">
    <property type="entry name" value="Azoreductase_type1"/>
    <property type="match status" value="1"/>
</dbReference>
<dbReference type="InterPro" id="IPR003680">
    <property type="entry name" value="Flavodoxin_fold"/>
</dbReference>
<dbReference type="InterPro" id="IPR029039">
    <property type="entry name" value="Flavoprotein-like_sf"/>
</dbReference>
<dbReference type="InterPro" id="IPR050104">
    <property type="entry name" value="FMN-dep_NADH:Q_OxRdtase_AzoR1"/>
</dbReference>
<dbReference type="InterPro" id="IPR023048">
    <property type="entry name" value="NADH:quinone_OxRdtase_FMN_depd"/>
</dbReference>
<dbReference type="PANTHER" id="PTHR43741">
    <property type="entry name" value="FMN-DEPENDENT NADH-AZOREDUCTASE 1"/>
    <property type="match status" value="1"/>
</dbReference>
<dbReference type="PANTHER" id="PTHR43741:SF2">
    <property type="entry name" value="FMN-DEPENDENT NADH:QUINONE OXIDOREDUCTASE"/>
    <property type="match status" value="1"/>
</dbReference>
<dbReference type="Pfam" id="PF02525">
    <property type="entry name" value="Flavodoxin_2"/>
    <property type="match status" value="1"/>
</dbReference>
<dbReference type="SUPFAM" id="SSF52218">
    <property type="entry name" value="Flavoproteins"/>
    <property type="match status" value="1"/>
</dbReference>
<accession>A7IDY1</accession>
<organism>
    <name type="scientific">Xanthobacter autotrophicus (strain ATCC BAA-1158 / Py2)</name>
    <dbReference type="NCBI Taxonomy" id="78245"/>
    <lineage>
        <taxon>Bacteria</taxon>
        <taxon>Pseudomonadati</taxon>
        <taxon>Pseudomonadota</taxon>
        <taxon>Alphaproteobacteria</taxon>
        <taxon>Hyphomicrobiales</taxon>
        <taxon>Xanthobacteraceae</taxon>
        <taxon>Xanthobacter</taxon>
    </lineage>
</organism>
<gene>
    <name evidence="1" type="primary">azoR</name>
    <name type="ordered locus">Xaut_0973</name>
</gene>
<feature type="chain" id="PRO_1000138989" description="FMN-dependent NADH:quinone oxidoreductase">
    <location>
        <begin position="1"/>
        <end position="208"/>
    </location>
</feature>
<feature type="binding site" evidence="1">
    <location>
        <position position="10"/>
    </location>
    <ligand>
        <name>FMN</name>
        <dbReference type="ChEBI" id="CHEBI:58210"/>
    </ligand>
</feature>
<feature type="binding site" evidence="1">
    <location>
        <begin position="16"/>
        <end position="18"/>
    </location>
    <ligand>
        <name>FMN</name>
        <dbReference type="ChEBI" id="CHEBI:58210"/>
    </ligand>
</feature>
<feature type="binding site" evidence="1">
    <location>
        <begin position="96"/>
        <end position="99"/>
    </location>
    <ligand>
        <name>FMN</name>
        <dbReference type="ChEBI" id="CHEBI:58210"/>
    </ligand>
</feature>
<comment type="function">
    <text evidence="1">Quinone reductase that provides resistance to thiol-specific stress caused by electrophilic quinones.</text>
</comment>
<comment type="function">
    <text evidence="1">Also exhibits azoreductase activity. Catalyzes the reductive cleavage of the azo bond in aromatic azo compounds to the corresponding amines.</text>
</comment>
<comment type="catalytic activity">
    <reaction evidence="1">
        <text>2 a quinone + NADH + H(+) = 2 a 1,4-benzosemiquinone + NAD(+)</text>
        <dbReference type="Rhea" id="RHEA:65952"/>
        <dbReference type="ChEBI" id="CHEBI:15378"/>
        <dbReference type="ChEBI" id="CHEBI:57540"/>
        <dbReference type="ChEBI" id="CHEBI:57945"/>
        <dbReference type="ChEBI" id="CHEBI:132124"/>
        <dbReference type="ChEBI" id="CHEBI:134225"/>
    </reaction>
</comment>
<comment type="catalytic activity">
    <reaction evidence="1">
        <text>N,N-dimethyl-1,4-phenylenediamine + anthranilate + 2 NAD(+) = 2-(4-dimethylaminophenyl)diazenylbenzoate + 2 NADH + 2 H(+)</text>
        <dbReference type="Rhea" id="RHEA:55872"/>
        <dbReference type="ChEBI" id="CHEBI:15378"/>
        <dbReference type="ChEBI" id="CHEBI:15783"/>
        <dbReference type="ChEBI" id="CHEBI:16567"/>
        <dbReference type="ChEBI" id="CHEBI:57540"/>
        <dbReference type="ChEBI" id="CHEBI:57945"/>
        <dbReference type="ChEBI" id="CHEBI:71579"/>
        <dbReference type="EC" id="1.7.1.17"/>
    </reaction>
</comment>
<comment type="cofactor">
    <cofactor evidence="1">
        <name>FMN</name>
        <dbReference type="ChEBI" id="CHEBI:58210"/>
    </cofactor>
    <text evidence="1">Binds 1 FMN per subunit.</text>
</comment>
<comment type="subunit">
    <text evidence="1">Homodimer.</text>
</comment>
<comment type="similarity">
    <text evidence="1">Belongs to the azoreductase type 1 family.</text>
</comment>
<keyword id="KW-0285">Flavoprotein</keyword>
<keyword id="KW-0288">FMN</keyword>
<keyword id="KW-0520">NAD</keyword>
<keyword id="KW-0560">Oxidoreductase</keyword>
<keyword id="KW-1185">Reference proteome</keyword>
<sequence>MKTLLRIDSSARIEGSRSRRLGDALEARWRAGSPDGAVVRRDLAADPVPHIEATTIAGFFTPADQVTDAMRAATVLSDRLIGEVEAADALLITAPMYNFGLPSTLKAWIDHVVRIHRTVAYDGTTFRGLVTGKAAYVALAYGAGSYEPGGTLAPFDYAKPYLTHVLGFIGFRDIEVVGVEGTSGEEGAAAAALDAALKAIENLPSLAA</sequence>
<protein>
    <recommendedName>
        <fullName evidence="1">FMN-dependent NADH:quinone oxidoreductase</fullName>
        <ecNumber evidence="1">1.6.5.-</ecNumber>
    </recommendedName>
    <alternativeName>
        <fullName evidence="1">Azo-dye reductase</fullName>
    </alternativeName>
    <alternativeName>
        <fullName evidence="1">FMN-dependent NADH-azo compound oxidoreductase</fullName>
    </alternativeName>
    <alternativeName>
        <fullName evidence="1">FMN-dependent NADH-azoreductase</fullName>
        <ecNumber evidence="1">1.7.1.17</ecNumber>
    </alternativeName>
</protein>
<evidence type="ECO:0000255" key="1">
    <source>
        <dbReference type="HAMAP-Rule" id="MF_01216"/>
    </source>
</evidence>
<proteinExistence type="inferred from homology"/>
<reference key="1">
    <citation type="submission" date="2007-07" db="EMBL/GenBank/DDBJ databases">
        <title>Complete sequence of chromosome of Xanthobacter autotrophicus Py2.</title>
        <authorList>
            <consortium name="US DOE Joint Genome Institute"/>
            <person name="Copeland A."/>
            <person name="Lucas S."/>
            <person name="Lapidus A."/>
            <person name="Barry K."/>
            <person name="Glavina del Rio T."/>
            <person name="Hammon N."/>
            <person name="Israni S."/>
            <person name="Dalin E."/>
            <person name="Tice H."/>
            <person name="Pitluck S."/>
            <person name="Sims D."/>
            <person name="Brettin T."/>
            <person name="Bruce D."/>
            <person name="Detter J.C."/>
            <person name="Han C."/>
            <person name="Tapia R."/>
            <person name="Brainard J."/>
            <person name="Schmutz J."/>
            <person name="Larimer F."/>
            <person name="Land M."/>
            <person name="Hauser L."/>
            <person name="Kyrpides N."/>
            <person name="Kim E."/>
            <person name="Ensigns S.A."/>
            <person name="Richardson P."/>
        </authorList>
    </citation>
    <scope>NUCLEOTIDE SEQUENCE [LARGE SCALE GENOMIC DNA]</scope>
    <source>
        <strain>ATCC BAA-1158 / Py2</strain>
    </source>
</reference>
<name>AZOR_XANP2</name>